<keyword id="KW-0227">DNA damage</keyword>
<keyword id="KW-0234">DNA repair</keyword>
<keyword id="KW-0255">Endonuclease</keyword>
<keyword id="KW-0378">Hydrolase</keyword>
<keyword id="KW-0479">Metal-binding</keyword>
<keyword id="KW-0540">Nuclease</keyword>
<keyword id="KW-1185">Reference proteome</keyword>
<keyword id="KW-0862">Zinc</keyword>
<sequence>MKYIGAHVSAAGGLDQVIFRSKELGATAFSFFLSNPLRWNLIQFRDETIKKFIFLCKKFNYVSDQILPHSSYLINLGHPSDEHLKKSRLLFVNEIINCKKLNLSLLNFHPGSHLRKISEQHCLIRVADSINFALQNTVGVKLVIENTAGQGSNIGYCFEHLAQIIHKVKEKDRIGICLDTCHLHASGYDLKTELGCRQTFKAFNDIVGLHYLSGMHINDSKTKRNSRIDRHHNLGQGYIGKSSIRWIIRNINFKLFPMILETTNNKLWKDEINWINSL</sequence>
<reference key="1">
    <citation type="journal article" date="2003" name="Proc. Natl. Acad. Sci. U.S.A.">
        <title>Reductive genome evolution in Buchnera aphidicola.</title>
        <authorList>
            <person name="van Ham R.C.H.J."/>
            <person name="Kamerbeek J."/>
            <person name="Palacios C."/>
            <person name="Rausell C."/>
            <person name="Abascal F."/>
            <person name="Bastolla U."/>
            <person name="Fernandez J.M."/>
            <person name="Jimenez L."/>
            <person name="Postigo M."/>
            <person name="Silva F.J."/>
            <person name="Tamames J."/>
            <person name="Viguera E."/>
            <person name="Latorre A."/>
            <person name="Valencia A."/>
            <person name="Moran F."/>
            <person name="Moya A."/>
        </authorList>
    </citation>
    <scope>NUCLEOTIDE SEQUENCE [LARGE SCALE GENOMIC DNA]</scope>
    <source>
        <strain>Bp</strain>
    </source>
</reference>
<evidence type="ECO:0000255" key="1">
    <source>
        <dbReference type="HAMAP-Rule" id="MF_00152"/>
    </source>
</evidence>
<protein>
    <recommendedName>
        <fullName evidence="1">Probable endonuclease 4</fullName>
        <ecNumber evidence="1">3.1.21.2</ecNumber>
    </recommendedName>
    <alternativeName>
        <fullName evidence="1">Endodeoxyribonuclease IV</fullName>
    </alternativeName>
    <alternativeName>
        <fullName evidence="1">Endonuclease IV</fullName>
    </alternativeName>
</protein>
<comment type="function">
    <text evidence="1">Endonuclease IV plays a role in DNA repair. It cleaves phosphodiester bonds at apurinic or apyrimidinic (AP) sites, generating a 3'-hydroxyl group and a 5'-terminal sugar phosphate.</text>
</comment>
<comment type="catalytic activity">
    <reaction evidence="1">
        <text>Endonucleolytic cleavage to 5'-phosphooligonucleotide end-products.</text>
        <dbReference type="EC" id="3.1.21.2"/>
    </reaction>
</comment>
<comment type="cofactor">
    <cofactor evidence="1">
        <name>Zn(2+)</name>
        <dbReference type="ChEBI" id="CHEBI:29105"/>
    </cofactor>
    <text evidence="1">Binds 3 Zn(2+) ions.</text>
</comment>
<comment type="similarity">
    <text evidence="1">Belongs to the AP endonuclease 2 family.</text>
</comment>
<organism>
    <name type="scientific">Buchnera aphidicola subsp. Baizongia pistaciae (strain Bp)</name>
    <dbReference type="NCBI Taxonomy" id="224915"/>
    <lineage>
        <taxon>Bacteria</taxon>
        <taxon>Pseudomonadati</taxon>
        <taxon>Pseudomonadota</taxon>
        <taxon>Gammaproteobacteria</taxon>
        <taxon>Enterobacterales</taxon>
        <taxon>Erwiniaceae</taxon>
        <taxon>Buchnera</taxon>
    </lineage>
</organism>
<proteinExistence type="inferred from homology"/>
<dbReference type="EC" id="3.1.21.2" evidence="1"/>
<dbReference type="EMBL" id="AE016826">
    <property type="protein sequence ID" value="AAO26862.1"/>
    <property type="molecule type" value="Genomic_DNA"/>
</dbReference>
<dbReference type="RefSeq" id="WP_011091263.1">
    <property type="nucleotide sequence ID" value="NC_004545.1"/>
</dbReference>
<dbReference type="SMR" id="P59496"/>
<dbReference type="STRING" id="224915.bbp_128"/>
<dbReference type="KEGG" id="bab:bbp_128"/>
<dbReference type="eggNOG" id="COG0648">
    <property type="taxonomic scope" value="Bacteria"/>
</dbReference>
<dbReference type="HOGENOM" id="CLU_025885_0_4_6"/>
<dbReference type="OrthoDB" id="9805666at2"/>
<dbReference type="Proteomes" id="UP000000601">
    <property type="component" value="Chromosome"/>
</dbReference>
<dbReference type="GO" id="GO:0008833">
    <property type="term" value="F:deoxyribonuclease IV (phage-T4-induced) activity"/>
    <property type="evidence" value="ECO:0007669"/>
    <property type="project" value="UniProtKB-UniRule"/>
</dbReference>
<dbReference type="GO" id="GO:0003677">
    <property type="term" value="F:DNA binding"/>
    <property type="evidence" value="ECO:0007669"/>
    <property type="project" value="InterPro"/>
</dbReference>
<dbReference type="GO" id="GO:0003906">
    <property type="term" value="F:DNA-(apurinic or apyrimidinic site) endonuclease activity"/>
    <property type="evidence" value="ECO:0007669"/>
    <property type="project" value="TreeGrafter"/>
</dbReference>
<dbReference type="GO" id="GO:0008081">
    <property type="term" value="F:phosphoric diester hydrolase activity"/>
    <property type="evidence" value="ECO:0007669"/>
    <property type="project" value="TreeGrafter"/>
</dbReference>
<dbReference type="GO" id="GO:0008270">
    <property type="term" value="F:zinc ion binding"/>
    <property type="evidence" value="ECO:0007669"/>
    <property type="project" value="UniProtKB-UniRule"/>
</dbReference>
<dbReference type="GO" id="GO:0006284">
    <property type="term" value="P:base-excision repair"/>
    <property type="evidence" value="ECO:0007669"/>
    <property type="project" value="TreeGrafter"/>
</dbReference>
<dbReference type="CDD" id="cd00019">
    <property type="entry name" value="AP2Ec"/>
    <property type="match status" value="1"/>
</dbReference>
<dbReference type="FunFam" id="3.20.20.150:FF:000001">
    <property type="entry name" value="Probable endonuclease 4"/>
    <property type="match status" value="1"/>
</dbReference>
<dbReference type="Gene3D" id="3.20.20.150">
    <property type="entry name" value="Divalent-metal-dependent TIM barrel enzymes"/>
    <property type="match status" value="1"/>
</dbReference>
<dbReference type="HAMAP" id="MF_00152">
    <property type="entry name" value="Nfo"/>
    <property type="match status" value="1"/>
</dbReference>
<dbReference type="InterPro" id="IPR001719">
    <property type="entry name" value="AP_endonuc_2"/>
</dbReference>
<dbReference type="InterPro" id="IPR018246">
    <property type="entry name" value="AP_endonuc_F2_Zn_BS"/>
</dbReference>
<dbReference type="InterPro" id="IPR036237">
    <property type="entry name" value="Xyl_isomerase-like_sf"/>
</dbReference>
<dbReference type="InterPro" id="IPR013022">
    <property type="entry name" value="Xyl_isomerase-like_TIM-brl"/>
</dbReference>
<dbReference type="NCBIfam" id="TIGR00587">
    <property type="entry name" value="nfo"/>
    <property type="match status" value="1"/>
</dbReference>
<dbReference type="NCBIfam" id="NF002199">
    <property type="entry name" value="PRK01060.1-4"/>
    <property type="match status" value="1"/>
</dbReference>
<dbReference type="PANTHER" id="PTHR21445:SF0">
    <property type="entry name" value="APURINIC-APYRIMIDINIC ENDONUCLEASE"/>
    <property type="match status" value="1"/>
</dbReference>
<dbReference type="PANTHER" id="PTHR21445">
    <property type="entry name" value="ENDONUCLEASE IV ENDODEOXYRIBONUCLEASE IV"/>
    <property type="match status" value="1"/>
</dbReference>
<dbReference type="Pfam" id="PF01261">
    <property type="entry name" value="AP_endonuc_2"/>
    <property type="match status" value="1"/>
</dbReference>
<dbReference type="SMART" id="SM00518">
    <property type="entry name" value="AP2Ec"/>
    <property type="match status" value="1"/>
</dbReference>
<dbReference type="SUPFAM" id="SSF51658">
    <property type="entry name" value="Xylose isomerase-like"/>
    <property type="match status" value="1"/>
</dbReference>
<dbReference type="PROSITE" id="PS00729">
    <property type="entry name" value="AP_NUCLEASE_F2_1"/>
    <property type="match status" value="1"/>
</dbReference>
<dbReference type="PROSITE" id="PS00730">
    <property type="entry name" value="AP_NUCLEASE_F2_2"/>
    <property type="match status" value="1"/>
</dbReference>
<dbReference type="PROSITE" id="PS00731">
    <property type="entry name" value="AP_NUCLEASE_F2_3"/>
    <property type="match status" value="1"/>
</dbReference>
<dbReference type="PROSITE" id="PS51432">
    <property type="entry name" value="AP_NUCLEASE_F2_4"/>
    <property type="match status" value="1"/>
</dbReference>
<name>END4_BUCBP</name>
<feature type="chain" id="PRO_0000190830" description="Probable endonuclease 4">
    <location>
        <begin position="1"/>
        <end position="278"/>
    </location>
</feature>
<feature type="binding site" evidence="1">
    <location>
        <position position="69"/>
    </location>
    <ligand>
        <name>Zn(2+)</name>
        <dbReference type="ChEBI" id="CHEBI:29105"/>
        <label>1</label>
    </ligand>
</feature>
<feature type="binding site" evidence="1">
    <location>
        <position position="109"/>
    </location>
    <ligand>
        <name>Zn(2+)</name>
        <dbReference type="ChEBI" id="CHEBI:29105"/>
        <label>1</label>
    </ligand>
</feature>
<feature type="binding site" evidence="1">
    <location>
        <position position="145"/>
    </location>
    <ligand>
        <name>Zn(2+)</name>
        <dbReference type="ChEBI" id="CHEBI:29105"/>
        <label>1</label>
    </ligand>
</feature>
<feature type="binding site" evidence="1">
    <location>
        <position position="145"/>
    </location>
    <ligand>
        <name>Zn(2+)</name>
        <dbReference type="ChEBI" id="CHEBI:29105"/>
        <label>2</label>
    </ligand>
</feature>
<feature type="binding site" evidence="1">
    <location>
        <position position="179"/>
    </location>
    <ligand>
        <name>Zn(2+)</name>
        <dbReference type="ChEBI" id="CHEBI:29105"/>
        <label>2</label>
    </ligand>
</feature>
<feature type="binding site" evidence="1">
    <location>
        <position position="182"/>
    </location>
    <ligand>
        <name>Zn(2+)</name>
        <dbReference type="ChEBI" id="CHEBI:29105"/>
        <label>3</label>
    </ligand>
</feature>
<feature type="binding site" evidence="1">
    <location>
        <position position="216"/>
    </location>
    <ligand>
        <name>Zn(2+)</name>
        <dbReference type="ChEBI" id="CHEBI:29105"/>
        <label>2</label>
    </ligand>
</feature>
<feature type="binding site" evidence="1">
    <location>
        <position position="229"/>
    </location>
    <ligand>
        <name>Zn(2+)</name>
        <dbReference type="ChEBI" id="CHEBI:29105"/>
        <label>3</label>
    </ligand>
</feature>
<feature type="binding site" evidence="1">
    <location>
        <position position="231"/>
    </location>
    <ligand>
        <name>Zn(2+)</name>
        <dbReference type="ChEBI" id="CHEBI:29105"/>
        <label>3</label>
    </ligand>
</feature>
<feature type="binding site" evidence="1">
    <location>
        <position position="261"/>
    </location>
    <ligand>
        <name>Zn(2+)</name>
        <dbReference type="ChEBI" id="CHEBI:29105"/>
        <label>2</label>
    </ligand>
</feature>
<gene>
    <name evidence="1" type="primary">nfo</name>
    <name type="ordered locus">bbp_128</name>
</gene>
<accession>P59496</accession>